<proteinExistence type="evidence at protein level"/>
<keyword id="KW-0256">Endoplasmic reticulum</keyword>
<keyword id="KW-0325">Glycoprotein</keyword>
<keyword id="KW-0378">Hydrolase</keyword>
<keyword id="KW-0464">Manganese</keyword>
<keyword id="KW-0479">Metal-binding</keyword>
<keyword id="KW-0659">Purine metabolism</keyword>
<keyword id="KW-1185">Reference proteome</keyword>
<keyword id="KW-0732">Signal</keyword>
<comment type="function">
    <text evidence="6">Involved in the catabolism of purine nucleotides. The sequential activity of AAH, UGLYAH and UAH allows a complete purine breakdown without the intermediate generation of urea.</text>
</comment>
<comment type="catalytic activity">
    <reaction evidence="6">
        <text>allantoate + H2O + 2 H(+) = (S)-2-ureidoglycine + NH4(+) + CO2</text>
        <dbReference type="Rhea" id="RHEA:27485"/>
        <dbReference type="ChEBI" id="CHEBI:15377"/>
        <dbReference type="ChEBI" id="CHEBI:15378"/>
        <dbReference type="ChEBI" id="CHEBI:16526"/>
        <dbReference type="ChEBI" id="CHEBI:17536"/>
        <dbReference type="ChEBI" id="CHEBI:28938"/>
        <dbReference type="ChEBI" id="CHEBI:59947"/>
        <dbReference type="EC" id="3.5.3.9"/>
    </reaction>
</comment>
<comment type="cofactor">
    <cofactor evidence="1">
        <name>Mn(2+)</name>
        <dbReference type="ChEBI" id="CHEBI:29035"/>
    </cofactor>
    <text evidence="3">Binds 2 manganese ions per subunit.</text>
</comment>
<comment type="biophysicochemical properties">
    <kinetics>
        <KM evidence="6">83 uM for allantoate</KM>
    </kinetics>
</comment>
<comment type="subunit">
    <text evidence="2">Homodimer.</text>
</comment>
<comment type="subcellular location">
    <subcellularLocation>
        <location evidence="1">Endoplasmic reticulum</location>
    </subcellularLocation>
</comment>
<comment type="similarity">
    <text evidence="8">Belongs to the peptidase M20A family.</text>
</comment>
<organism>
    <name type="scientific">Oryza sativa subsp. japonica</name>
    <name type="common">Rice</name>
    <dbReference type="NCBI Taxonomy" id="39947"/>
    <lineage>
        <taxon>Eukaryota</taxon>
        <taxon>Viridiplantae</taxon>
        <taxon>Streptophyta</taxon>
        <taxon>Embryophyta</taxon>
        <taxon>Tracheophyta</taxon>
        <taxon>Spermatophyta</taxon>
        <taxon>Magnoliopsida</taxon>
        <taxon>Liliopsida</taxon>
        <taxon>Poales</taxon>
        <taxon>Poaceae</taxon>
        <taxon>BOP clade</taxon>
        <taxon>Oryzoideae</taxon>
        <taxon>Oryzeae</taxon>
        <taxon>Oryzinae</taxon>
        <taxon>Oryza</taxon>
        <taxon>Oryza sativa</taxon>
    </lineage>
</organism>
<name>AAH_ORYSJ</name>
<protein>
    <recommendedName>
        <fullName evidence="7">Probable allantoate deiminase</fullName>
        <ecNumber evidence="6">3.5.3.9</ecNumber>
    </recommendedName>
    <alternativeName>
        <fullName evidence="7">Allantoate amidohydrolase</fullName>
        <shortName evidence="7">OsAAH</shortName>
    </alternativeName>
</protein>
<dbReference type="EC" id="3.5.3.9" evidence="6"/>
<dbReference type="EMBL" id="AP003628">
    <property type="protein sequence ID" value="BAD45389.1"/>
    <property type="molecule type" value="Genomic_DNA"/>
</dbReference>
<dbReference type="EMBL" id="AP008212">
    <property type="protein sequence ID" value="BAF20218.1"/>
    <property type="molecule type" value="Genomic_DNA"/>
</dbReference>
<dbReference type="EMBL" id="AP014962">
    <property type="protein sequence ID" value="BAS99030.1"/>
    <property type="molecule type" value="Genomic_DNA"/>
</dbReference>
<dbReference type="EMBL" id="CM000143">
    <property type="protein sequence ID" value="EEE66180.1"/>
    <property type="molecule type" value="Genomic_DNA"/>
</dbReference>
<dbReference type="EMBL" id="AK073262">
    <property type="protein sequence ID" value="BAG93368.1"/>
    <property type="molecule type" value="mRNA"/>
</dbReference>
<dbReference type="RefSeq" id="XP_015644100.1">
    <property type="nucleotide sequence ID" value="XM_015788614.1"/>
</dbReference>
<dbReference type="SMR" id="Q655X8"/>
<dbReference type="FunCoup" id="Q655X8">
    <property type="interactions" value="33"/>
</dbReference>
<dbReference type="STRING" id="39947.Q655X8"/>
<dbReference type="PaxDb" id="39947-Q655X8"/>
<dbReference type="EnsemblPlants" id="Os06t0665500-01">
    <property type="protein sequence ID" value="Os06t0665500-01"/>
    <property type="gene ID" value="Os06g0665500"/>
</dbReference>
<dbReference type="Gramene" id="Os06t0665500-01">
    <property type="protein sequence ID" value="Os06t0665500-01"/>
    <property type="gene ID" value="Os06g0665500"/>
</dbReference>
<dbReference type="KEGG" id="dosa:Os06g0665500"/>
<dbReference type="eggNOG" id="ENOG502QSJ5">
    <property type="taxonomic scope" value="Eukaryota"/>
</dbReference>
<dbReference type="HOGENOM" id="CLU_024588_1_0_1"/>
<dbReference type="InParanoid" id="Q655X8"/>
<dbReference type="OMA" id="CSSGVWA"/>
<dbReference type="OrthoDB" id="4676at2759"/>
<dbReference type="PlantReactome" id="R-OSA-1119502">
    <property type="pathway name" value="Allantoin degradation"/>
</dbReference>
<dbReference type="SABIO-RK" id="Q655X8"/>
<dbReference type="Proteomes" id="UP000000763">
    <property type="component" value="Chromosome 6"/>
</dbReference>
<dbReference type="Proteomes" id="UP000007752">
    <property type="component" value="Chromosome 6"/>
</dbReference>
<dbReference type="Proteomes" id="UP000059680">
    <property type="component" value="Chromosome 6"/>
</dbReference>
<dbReference type="GO" id="GO:0005783">
    <property type="term" value="C:endoplasmic reticulum"/>
    <property type="evidence" value="ECO:0007669"/>
    <property type="project" value="UniProtKB-SubCell"/>
</dbReference>
<dbReference type="GO" id="GO:0047652">
    <property type="term" value="F:allantoate deiminase activity"/>
    <property type="evidence" value="ECO:0000314"/>
    <property type="project" value="UniProtKB"/>
</dbReference>
<dbReference type="GO" id="GO:0046872">
    <property type="term" value="F:metal ion binding"/>
    <property type="evidence" value="ECO:0007669"/>
    <property type="project" value="UniProtKB-KW"/>
</dbReference>
<dbReference type="GO" id="GO:0000256">
    <property type="term" value="P:allantoin catabolic process"/>
    <property type="evidence" value="ECO:0000304"/>
    <property type="project" value="UniProtKB"/>
</dbReference>
<dbReference type="GO" id="GO:0006145">
    <property type="term" value="P:purine nucleobase catabolic process"/>
    <property type="evidence" value="ECO:0007669"/>
    <property type="project" value="EnsemblPlants"/>
</dbReference>
<dbReference type="GO" id="GO:0010136">
    <property type="term" value="P:ureide catabolic process"/>
    <property type="evidence" value="ECO:0007669"/>
    <property type="project" value="EnsemblPlants"/>
</dbReference>
<dbReference type="CDD" id="cd03884">
    <property type="entry name" value="M20_bAS"/>
    <property type="match status" value="1"/>
</dbReference>
<dbReference type="FunFam" id="3.40.630.10:FF:000044">
    <property type="entry name" value="Allantoate amidohydrolase"/>
    <property type="match status" value="1"/>
</dbReference>
<dbReference type="FunFam" id="3.30.70.360:FF:000019">
    <property type="entry name" value="Allantoate deiminase"/>
    <property type="match status" value="1"/>
</dbReference>
<dbReference type="Gene3D" id="3.30.70.360">
    <property type="match status" value="1"/>
</dbReference>
<dbReference type="Gene3D" id="3.40.630.10">
    <property type="entry name" value="Zn peptidases"/>
    <property type="match status" value="1"/>
</dbReference>
<dbReference type="InterPro" id="IPR010158">
    <property type="entry name" value="Amidase_Cbmase"/>
</dbReference>
<dbReference type="InterPro" id="IPR001261">
    <property type="entry name" value="ArgE/DapE_CS"/>
</dbReference>
<dbReference type="InterPro" id="IPR036264">
    <property type="entry name" value="Bact_exopeptidase_dim_dom"/>
</dbReference>
<dbReference type="InterPro" id="IPR002933">
    <property type="entry name" value="Peptidase_M20"/>
</dbReference>
<dbReference type="InterPro" id="IPR011650">
    <property type="entry name" value="Peptidase_M20_dimer"/>
</dbReference>
<dbReference type="NCBIfam" id="TIGR01879">
    <property type="entry name" value="hydantase"/>
    <property type="match status" value="1"/>
</dbReference>
<dbReference type="PANTHER" id="PTHR32494">
    <property type="entry name" value="ALLANTOATE DEIMINASE-RELATED"/>
    <property type="match status" value="1"/>
</dbReference>
<dbReference type="PANTHER" id="PTHR32494:SF19">
    <property type="entry name" value="ALLANTOATE DEIMINASE-RELATED"/>
    <property type="match status" value="1"/>
</dbReference>
<dbReference type="Pfam" id="PF07687">
    <property type="entry name" value="M20_dimer"/>
    <property type="match status" value="1"/>
</dbReference>
<dbReference type="Pfam" id="PF01546">
    <property type="entry name" value="Peptidase_M20"/>
    <property type="match status" value="1"/>
</dbReference>
<dbReference type="SUPFAM" id="SSF55031">
    <property type="entry name" value="Bacterial exopeptidase dimerisation domain"/>
    <property type="match status" value="1"/>
</dbReference>
<dbReference type="SUPFAM" id="SSF53187">
    <property type="entry name" value="Zn-dependent exopeptidases"/>
    <property type="match status" value="1"/>
</dbReference>
<dbReference type="PROSITE" id="PS00758">
    <property type="entry name" value="ARGE_DAPE_CPG2_1"/>
    <property type="match status" value="1"/>
</dbReference>
<reference key="1">
    <citation type="journal article" date="2005" name="Nature">
        <title>The map-based sequence of the rice genome.</title>
        <authorList>
            <consortium name="International rice genome sequencing project (IRGSP)"/>
        </authorList>
    </citation>
    <scope>NUCLEOTIDE SEQUENCE [LARGE SCALE GENOMIC DNA]</scope>
    <source>
        <strain>cv. Nipponbare</strain>
    </source>
</reference>
<reference key="2">
    <citation type="journal article" date="2008" name="Nucleic Acids Res.">
        <title>The rice annotation project database (RAP-DB): 2008 update.</title>
        <authorList>
            <consortium name="The rice annotation project (RAP)"/>
        </authorList>
    </citation>
    <scope>GENOME REANNOTATION</scope>
    <source>
        <strain>cv. Nipponbare</strain>
    </source>
</reference>
<reference key="3">
    <citation type="journal article" date="2013" name="Rice">
        <title>Improvement of the Oryza sativa Nipponbare reference genome using next generation sequence and optical map data.</title>
        <authorList>
            <person name="Kawahara Y."/>
            <person name="de la Bastide M."/>
            <person name="Hamilton J.P."/>
            <person name="Kanamori H."/>
            <person name="McCombie W.R."/>
            <person name="Ouyang S."/>
            <person name="Schwartz D.C."/>
            <person name="Tanaka T."/>
            <person name="Wu J."/>
            <person name="Zhou S."/>
            <person name="Childs K.L."/>
            <person name="Davidson R.M."/>
            <person name="Lin H."/>
            <person name="Quesada-Ocampo L."/>
            <person name="Vaillancourt B."/>
            <person name="Sakai H."/>
            <person name="Lee S.S."/>
            <person name="Kim J."/>
            <person name="Numa H."/>
            <person name="Itoh T."/>
            <person name="Buell C.R."/>
            <person name="Matsumoto T."/>
        </authorList>
    </citation>
    <scope>GENOME REANNOTATION</scope>
    <source>
        <strain>cv. Nipponbare</strain>
    </source>
</reference>
<reference key="4">
    <citation type="journal article" date="2005" name="PLoS Biol.">
        <title>The genomes of Oryza sativa: a history of duplications.</title>
        <authorList>
            <person name="Yu J."/>
            <person name="Wang J."/>
            <person name="Lin W."/>
            <person name="Li S."/>
            <person name="Li H."/>
            <person name="Zhou J."/>
            <person name="Ni P."/>
            <person name="Dong W."/>
            <person name="Hu S."/>
            <person name="Zeng C."/>
            <person name="Zhang J."/>
            <person name="Zhang Y."/>
            <person name="Li R."/>
            <person name="Xu Z."/>
            <person name="Li S."/>
            <person name="Li X."/>
            <person name="Zheng H."/>
            <person name="Cong L."/>
            <person name="Lin L."/>
            <person name="Yin J."/>
            <person name="Geng J."/>
            <person name="Li G."/>
            <person name="Shi J."/>
            <person name="Liu J."/>
            <person name="Lv H."/>
            <person name="Li J."/>
            <person name="Wang J."/>
            <person name="Deng Y."/>
            <person name="Ran L."/>
            <person name="Shi X."/>
            <person name="Wang X."/>
            <person name="Wu Q."/>
            <person name="Li C."/>
            <person name="Ren X."/>
            <person name="Wang J."/>
            <person name="Wang X."/>
            <person name="Li D."/>
            <person name="Liu D."/>
            <person name="Zhang X."/>
            <person name="Ji Z."/>
            <person name="Zhao W."/>
            <person name="Sun Y."/>
            <person name="Zhang Z."/>
            <person name="Bao J."/>
            <person name="Han Y."/>
            <person name="Dong L."/>
            <person name="Ji J."/>
            <person name="Chen P."/>
            <person name="Wu S."/>
            <person name="Liu J."/>
            <person name="Xiao Y."/>
            <person name="Bu D."/>
            <person name="Tan J."/>
            <person name="Yang L."/>
            <person name="Ye C."/>
            <person name="Zhang J."/>
            <person name="Xu J."/>
            <person name="Zhou Y."/>
            <person name="Yu Y."/>
            <person name="Zhang B."/>
            <person name="Zhuang S."/>
            <person name="Wei H."/>
            <person name="Liu B."/>
            <person name="Lei M."/>
            <person name="Yu H."/>
            <person name="Li Y."/>
            <person name="Xu H."/>
            <person name="Wei S."/>
            <person name="He X."/>
            <person name="Fang L."/>
            <person name="Zhang Z."/>
            <person name="Zhang Y."/>
            <person name="Huang X."/>
            <person name="Su Z."/>
            <person name="Tong W."/>
            <person name="Li J."/>
            <person name="Tong Z."/>
            <person name="Li S."/>
            <person name="Ye J."/>
            <person name="Wang L."/>
            <person name="Fang L."/>
            <person name="Lei T."/>
            <person name="Chen C.-S."/>
            <person name="Chen H.-C."/>
            <person name="Xu Z."/>
            <person name="Li H."/>
            <person name="Huang H."/>
            <person name="Zhang F."/>
            <person name="Xu H."/>
            <person name="Li N."/>
            <person name="Zhao C."/>
            <person name="Li S."/>
            <person name="Dong L."/>
            <person name="Huang Y."/>
            <person name="Li L."/>
            <person name="Xi Y."/>
            <person name="Qi Q."/>
            <person name="Li W."/>
            <person name="Zhang B."/>
            <person name="Hu W."/>
            <person name="Zhang Y."/>
            <person name="Tian X."/>
            <person name="Jiao Y."/>
            <person name="Liang X."/>
            <person name="Jin J."/>
            <person name="Gao L."/>
            <person name="Zheng W."/>
            <person name="Hao B."/>
            <person name="Liu S.-M."/>
            <person name="Wang W."/>
            <person name="Yuan L."/>
            <person name="Cao M."/>
            <person name="McDermott J."/>
            <person name="Samudrala R."/>
            <person name="Wang J."/>
            <person name="Wong G.K.-S."/>
            <person name="Yang H."/>
        </authorList>
    </citation>
    <scope>NUCLEOTIDE SEQUENCE [LARGE SCALE GENOMIC DNA]</scope>
    <source>
        <strain>cv. Nipponbare</strain>
    </source>
</reference>
<reference key="5">
    <citation type="journal article" date="2003" name="Science">
        <title>Collection, mapping, and annotation of over 28,000 cDNA clones from japonica rice.</title>
        <authorList>
            <consortium name="The rice full-length cDNA consortium"/>
        </authorList>
    </citation>
    <scope>NUCLEOTIDE SEQUENCE [LARGE SCALE MRNA]</scope>
    <source>
        <strain>cv. Nipponbare</strain>
    </source>
</reference>
<reference key="6">
    <citation type="journal article" date="2010" name="Nat. Chem. Biol.">
        <title>Ureide catabolism in Arabidopsis thaliana and Escherichia coli.</title>
        <authorList>
            <person name="Werner A.K."/>
            <person name="Romeis T."/>
            <person name="Witte C.P."/>
        </authorList>
    </citation>
    <scope>IDENTIFICATION</scope>
</reference>
<reference key="7">
    <citation type="journal article" date="2013" name="Plant Physiol.">
        <title>The ureide-degrading reactions of purine ring catabolism employ three amidohydrolases and one aminohydrolase in Arabidopsis, soybean, and rice.</title>
        <authorList>
            <person name="Werner A.K."/>
            <person name="Medina-Escobar N."/>
            <person name="Zulawski M."/>
            <person name="Sparkes I.A."/>
            <person name="Cao F.Q."/>
            <person name="Witte C.P."/>
        </authorList>
    </citation>
    <scope>FUNCTION</scope>
    <scope>CATALYTIC ACTIVITY</scope>
    <scope>BIOPHYSICOCHEMICAL PROPERTIES</scope>
</reference>
<accession>Q655X8</accession>
<accession>A0A0P0WZU4</accession>
<accession>B9FQD8</accession>
<sequence>MALLLSYPRRHPSIHLLILSAYALFLLPILDGLELGGDGLYREILRDETVLRLKELGKISDGEGYLERTFLSPASIRASAVIISWMKDAGLTTWIDQMGNIHGRFEPTNSTKEALLIGSHMDTVIDAGMYDGALGIISAISALKVLKVTGRLQRLTRPVEVIAFSDEEGVRFQTTFLGSAAVAGTLPESILQVSDKSGTTVQDVLKLNSLEGTANALGEVRYSPESVGSYVEVHIEQGPVLEALRYPLGVVKGIAGQTRLKVIINGSQGHAGTVPMKLRRDPMVAAAELVLTLETLCKEPNKFLTYDEECGCFTEESLAGLVCTVGELLTWPSASNVIPGQVNFTVDIRAMDDKVRETIVTSFSRLVLQRCDDRLVDCAVEQKHAAAATPCDAELTSRLERATRSTISSMAAGVRRAGGETPVLMSGAGHDAMAMARLTKVGMLFVRCRGGVSHSPEESVMDDDVWAAGLALVNFIDQNAVDAAAATAAES</sequence>
<evidence type="ECO:0000250" key="1">
    <source>
        <dbReference type="UniProtKB" id="C0M0V4"/>
    </source>
</evidence>
<evidence type="ECO:0000250" key="2">
    <source>
        <dbReference type="UniProtKB" id="O49434"/>
    </source>
</evidence>
<evidence type="ECO:0000250" key="3">
    <source>
        <dbReference type="UniProtKB" id="Q8VXY9"/>
    </source>
</evidence>
<evidence type="ECO:0000255" key="4"/>
<evidence type="ECO:0000255" key="5">
    <source>
        <dbReference type="PROSITE-ProRule" id="PRU00498"/>
    </source>
</evidence>
<evidence type="ECO:0000269" key="6">
    <source>
    </source>
</evidence>
<evidence type="ECO:0000303" key="7">
    <source>
    </source>
</evidence>
<evidence type="ECO:0000305" key="8"/>
<evidence type="ECO:0000312" key="9">
    <source>
        <dbReference type="EMBL" id="BAD45389.1"/>
    </source>
</evidence>
<evidence type="ECO:0000312" key="10">
    <source>
        <dbReference type="EMBL" id="BAS99030.1"/>
    </source>
</evidence>
<evidence type="ECO:0000312" key="11">
    <source>
        <dbReference type="EMBL" id="EEE66180.1"/>
    </source>
</evidence>
<feature type="signal peptide" evidence="4">
    <location>
        <begin position="1"/>
        <end position="32"/>
    </location>
</feature>
<feature type="chain" id="PRO_0000423443" description="Probable allantoate deiminase">
    <location>
        <begin position="33"/>
        <end position="491"/>
    </location>
</feature>
<feature type="binding site" evidence="3">
    <location>
        <position position="120"/>
    </location>
    <ligand>
        <name>Mn(2+)</name>
        <dbReference type="ChEBI" id="CHEBI:29035"/>
        <label>1</label>
    </ligand>
</feature>
<feature type="binding site" evidence="3">
    <location>
        <position position="131"/>
    </location>
    <ligand>
        <name>Mn(2+)</name>
        <dbReference type="ChEBI" id="CHEBI:29035"/>
        <label>1</label>
    </ligand>
</feature>
<feature type="binding site" evidence="3">
    <location>
        <position position="131"/>
    </location>
    <ligand>
        <name>Mn(2+)</name>
        <dbReference type="ChEBI" id="CHEBI:29035"/>
        <label>2</label>
    </ligand>
</feature>
<feature type="binding site" evidence="3">
    <location>
        <position position="168"/>
    </location>
    <ligand>
        <name>Mn(2+)</name>
        <dbReference type="ChEBI" id="CHEBI:29035"/>
        <label>2</label>
    </ligand>
</feature>
<feature type="binding site" evidence="3">
    <location>
        <position position="234"/>
    </location>
    <ligand>
        <name>Mn(2+)</name>
        <dbReference type="ChEBI" id="CHEBI:29035"/>
        <label>1</label>
    </ligand>
</feature>
<feature type="binding site" evidence="3">
    <location>
        <position position="454"/>
    </location>
    <ligand>
        <name>Mn(2+)</name>
        <dbReference type="ChEBI" id="CHEBI:29035"/>
        <label>2</label>
    </ligand>
</feature>
<feature type="glycosylation site" description="N-linked (GlcNAc...) asparagine" evidence="5">
    <location>
        <position position="109"/>
    </location>
</feature>
<feature type="glycosylation site" description="N-linked (GlcNAc...) asparagine" evidence="5">
    <location>
        <position position="265"/>
    </location>
</feature>
<feature type="glycosylation site" description="N-linked (GlcNAc...) asparagine" evidence="5">
    <location>
        <position position="343"/>
    </location>
</feature>
<feature type="sequence conflict" description="In Ref. 4; EEE66180." evidence="8" ref="4">
    <original>VR</original>
    <variation>FP</variation>
    <location>
        <begin position="414"/>
        <end position="415"/>
    </location>
</feature>
<gene>
    <name evidence="7" type="primary">AAH</name>
    <name evidence="10" type="ordered locus">Os06g0665500</name>
    <name evidence="8" type="ordered locus">LOC_Os06g45480</name>
    <name evidence="11" type="ORF">OsJ_22281</name>
    <name evidence="9" type="ORF">P0473H04.24</name>
</gene>